<proteinExistence type="inferred from homology"/>
<organism>
    <name type="scientific">Escherichia coli O6:K15:H31 (strain 536 / UPEC)</name>
    <dbReference type="NCBI Taxonomy" id="362663"/>
    <lineage>
        <taxon>Bacteria</taxon>
        <taxon>Pseudomonadati</taxon>
        <taxon>Pseudomonadota</taxon>
        <taxon>Gammaproteobacteria</taxon>
        <taxon>Enterobacterales</taxon>
        <taxon>Enterobacteriaceae</taxon>
        <taxon>Escherichia</taxon>
    </lineage>
</organism>
<dbReference type="EMBL" id="CP000247">
    <property type="protein sequence ID" value="ABG72075.1"/>
    <property type="molecule type" value="Genomic_DNA"/>
</dbReference>
<dbReference type="RefSeq" id="WP_001166063.1">
    <property type="nucleotide sequence ID" value="NC_008253.1"/>
</dbReference>
<dbReference type="GeneID" id="75204583"/>
<dbReference type="KEGG" id="ecp:ECP_4119"/>
<dbReference type="HOGENOM" id="CLU_057476_0_1_6"/>
<dbReference type="Proteomes" id="UP000009182">
    <property type="component" value="Chromosome"/>
</dbReference>
<dbReference type="GO" id="GO:0005886">
    <property type="term" value="C:plasma membrane"/>
    <property type="evidence" value="ECO:0007669"/>
    <property type="project" value="UniProtKB-SubCell"/>
</dbReference>
<dbReference type="GO" id="GO:0015649">
    <property type="term" value="F:2-keto-3-deoxygluconate:proton symporter activity"/>
    <property type="evidence" value="ECO:0007669"/>
    <property type="project" value="UniProtKB-UniRule"/>
</dbReference>
<dbReference type="HAMAP" id="MF_00070">
    <property type="entry name" value="KdgT"/>
    <property type="match status" value="1"/>
</dbReference>
<dbReference type="InterPro" id="IPR004684">
    <property type="entry name" value="2keto-3dGluconate_permease"/>
</dbReference>
<dbReference type="InterPro" id="IPR018395">
    <property type="entry name" value="2keto-3dGluconate_permease_sub"/>
</dbReference>
<dbReference type="NCBIfam" id="TIGR00793">
    <property type="entry name" value="kdgT"/>
    <property type="match status" value="1"/>
</dbReference>
<dbReference type="Pfam" id="PF03812">
    <property type="entry name" value="KdgT"/>
    <property type="match status" value="1"/>
</dbReference>
<accession>Q0TAF4</accession>
<gene>
    <name evidence="1" type="primary">kdgT</name>
    <name type="ordered locus">ECP_4119</name>
</gene>
<comment type="function">
    <text evidence="1">Catalyzes the proton-dependent uptake of 2-keto-3-deoxygluconate (KDG) into the cell.</text>
</comment>
<comment type="catalytic activity">
    <reaction evidence="1">
        <text>2-dehydro-3-deoxy-D-gluconate(in) + H(+)(in) = 2-dehydro-3-deoxy-D-gluconate(out) + H(+)(out)</text>
        <dbReference type="Rhea" id="RHEA:29943"/>
        <dbReference type="ChEBI" id="CHEBI:15378"/>
        <dbReference type="ChEBI" id="CHEBI:57990"/>
    </reaction>
    <physiologicalReaction direction="right-to-left" evidence="1">
        <dbReference type="Rhea" id="RHEA:29945"/>
    </physiologicalReaction>
</comment>
<comment type="subcellular location">
    <subcellularLocation>
        <location evidence="1">Cell inner membrane</location>
        <topology evidence="1">Multi-pass membrane protein</topology>
    </subcellularLocation>
</comment>
<comment type="similarity">
    <text evidence="1">Belongs to the KdgT transporter family.</text>
</comment>
<keyword id="KW-0997">Cell inner membrane</keyword>
<keyword id="KW-1003">Cell membrane</keyword>
<keyword id="KW-0472">Membrane</keyword>
<keyword id="KW-0762">Sugar transport</keyword>
<keyword id="KW-0769">Symport</keyword>
<keyword id="KW-0812">Transmembrane</keyword>
<keyword id="KW-1133">Transmembrane helix</keyword>
<keyword id="KW-0813">Transport</keyword>
<evidence type="ECO:0000255" key="1">
    <source>
        <dbReference type="HAMAP-Rule" id="MF_00070"/>
    </source>
</evidence>
<name>KDGT_ECOL5</name>
<protein>
    <recommendedName>
        <fullName evidence="1">2-keto-3-deoxygluconate permease</fullName>
        <shortName evidence="1">KDG permease</shortName>
    </recommendedName>
</protein>
<feature type="chain" id="PRO_1000031954" description="2-keto-3-deoxygluconate permease">
    <location>
        <begin position="1"/>
        <end position="327"/>
    </location>
</feature>
<feature type="transmembrane region" description="Helical" evidence="1">
    <location>
        <begin position="10"/>
        <end position="30"/>
    </location>
</feature>
<feature type="transmembrane region" description="Helical" evidence="1">
    <location>
        <begin position="42"/>
        <end position="62"/>
    </location>
</feature>
<feature type="transmembrane region" description="Helical" evidence="1">
    <location>
        <begin position="73"/>
        <end position="93"/>
    </location>
</feature>
<feature type="transmembrane region" description="Helical" evidence="1">
    <location>
        <begin position="95"/>
        <end position="115"/>
    </location>
</feature>
<feature type="transmembrane region" description="Helical" evidence="1">
    <location>
        <begin position="139"/>
        <end position="159"/>
    </location>
</feature>
<feature type="transmembrane region" description="Helical" evidence="1">
    <location>
        <begin position="163"/>
        <end position="183"/>
    </location>
</feature>
<feature type="transmembrane region" description="Helical" evidence="1">
    <location>
        <begin position="199"/>
        <end position="219"/>
    </location>
</feature>
<feature type="transmembrane region" description="Helical" evidence="1">
    <location>
        <begin position="224"/>
        <end position="244"/>
    </location>
</feature>
<feature type="transmembrane region" description="Helical" evidence="1">
    <location>
        <begin position="254"/>
        <end position="274"/>
    </location>
</feature>
<feature type="transmembrane region" description="Helical" evidence="1">
    <location>
        <begin position="289"/>
        <end position="309"/>
    </location>
</feature>
<sequence length="327" mass="33669">MQIKRSIEKIPGGMMLVPLFLGALCHTFSPGAGKYFGSFTNGMITGTVPILAVWFFCMGASIKLSATGTVLRKSGTLVVTKIAVAWVVAAIASRIIPEHGVEVGFFAGLSTLALVAAMDMTNGGLYASIMQQYGTKEEAGAFVLMSLESGPLMTMIILGTAGIASFEPHVFVGAVLPFLVGFALGNLDPELREFFSKAVQTLIPFFAFALGNTIDLTVIAQTGLLGILLGVAVIIVTGIPLIIADKLIGGGDGTAGIAASSSAGAAVATPVLIAEMVPAFKPMAPAATSLVATAVIVTSILVPILTSIWSRKVKARAAKIEILGTVK</sequence>
<reference key="1">
    <citation type="journal article" date="2006" name="Mol. Microbiol.">
        <title>Role of pathogenicity island-associated integrases in the genome plasticity of uropathogenic Escherichia coli strain 536.</title>
        <authorList>
            <person name="Hochhut B."/>
            <person name="Wilde C."/>
            <person name="Balling G."/>
            <person name="Middendorf B."/>
            <person name="Dobrindt U."/>
            <person name="Brzuszkiewicz E."/>
            <person name="Gottschalk G."/>
            <person name="Carniel E."/>
            <person name="Hacker J."/>
        </authorList>
    </citation>
    <scope>NUCLEOTIDE SEQUENCE [LARGE SCALE GENOMIC DNA]</scope>
    <source>
        <strain>536 / UPEC</strain>
    </source>
</reference>